<name>LIS11_TALMQ</name>
<sequence length="459" mass="50783">MSRLLTIRQAEELHKSIIAYLSANNLSNAASALRGELGLSEEVFDTGTMVKYETLLEKKWTSIVRLQKKIMDLEARCGALQTELNNATPTSLSKRNQDPASWLPKVPARYSLESHRNTINCLAFHPKFSSIASGSDDCMIKIWDWELGELETTLKGHTRAVLDVDYGNTQSGVLLASCSSDLSIKIWNPLEDYKNIRTLLGHEHSVSAVRFIPGRNLLTSASRDKDLRIWDVTTGFCVKTIQGHSGWVRDVCPSFDGNYLFSAGDDVTARLWDITNISNPEAKLTMVGHDHVIECCAVAPQTSYQYLAPMAGLKKEALSKMSAVEFTATGSRDKTIKVWDRRGSCLMTLVGHDNWVRAIVFHPGGKYLLSASDDKSIRCWDLSQDGKCVKTLSDAHGRFVTCLRWAPSVVKEVAPSAESANGQTDTNDLLKSKDNQPQVQIRCVVASGGVDQKLNIFAN</sequence>
<reference key="1">
    <citation type="journal article" date="2015" name="Genome Announc.">
        <title>Genome sequence of the AIDS-associated pathogen Penicillium marneffei (ATCC18224) and its near taxonomic relative Talaromyces stipitatus (ATCC10500).</title>
        <authorList>
            <person name="Nierman W.C."/>
            <person name="Fedorova-Abrams N.D."/>
            <person name="Andrianopoulos A."/>
        </authorList>
    </citation>
    <scope>NUCLEOTIDE SEQUENCE [LARGE SCALE GENOMIC DNA]</scope>
    <source>
        <strain>ATCC 18224 / CBS 334.59 / QM 7333</strain>
    </source>
</reference>
<comment type="function">
    <text evidence="1">Positively regulates the activity of the minus-end directed microtubule motor protein dynein. May enhance dynein-mediated microtubule sliding by targeting dynein to the microtubule plus end. Required for nuclear migration during vegetative growth as well as development. Required for retrograde early endosome (EE) transport from the hyphal tip. Required for localization of dynein to the mitotic spindle poles. Recruits additional proteins to the dynein complex at SPBs.</text>
</comment>
<comment type="subunit">
    <text evidence="1">Self-associates. Interacts with nudE and dynein.</text>
</comment>
<comment type="subcellular location">
    <subcellularLocation>
        <location evidence="1">Cytoplasm</location>
        <location evidence="1">Cytoskeleton</location>
    </subcellularLocation>
    <subcellularLocation>
        <location evidence="1">Cytoplasm</location>
        <location evidence="1">Cytoskeleton</location>
        <location evidence="1">Spindle pole</location>
    </subcellularLocation>
    <text evidence="1">Localizes to the plus ends of microtubules at the hyphal tip and the mitotic spindle poles.</text>
</comment>
<comment type="domain">
    <text evidence="1">Dimerization mediated by the LisH domain may be required to activate dynein.</text>
</comment>
<comment type="similarity">
    <text evidence="1">Belongs to the WD repeat LIS1/nudF family.</text>
</comment>
<protein>
    <recommendedName>
        <fullName evidence="1">Nuclear distribution protein nudF 1</fullName>
    </recommendedName>
    <alternativeName>
        <fullName evidence="1">Lissencephaly-1 homolog 1</fullName>
        <shortName evidence="1">LIS-1 1</shortName>
    </alternativeName>
</protein>
<keyword id="KW-0131">Cell cycle</keyword>
<keyword id="KW-0132">Cell division</keyword>
<keyword id="KW-0175">Coiled coil</keyword>
<keyword id="KW-0963">Cytoplasm</keyword>
<keyword id="KW-0206">Cytoskeleton</keyword>
<keyword id="KW-0493">Microtubule</keyword>
<keyword id="KW-0498">Mitosis</keyword>
<keyword id="KW-1185">Reference proteome</keyword>
<keyword id="KW-0677">Repeat</keyword>
<keyword id="KW-0813">Transport</keyword>
<keyword id="KW-0853">WD repeat</keyword>
<organism>
    <name type="scientific">Talaromyces marneffei (strain ATCC 18224 / CBS 334.59 / QM 7333)</name>
    <name type="common">Penicillium marneffei</name>
    <dbReference type="NCBI Taxonomy" id="441960"/>
    <lineage>
        <taxon>Eukaryota</taxon>
        <taxon>Fungi</taxon>
        <taxon>Dikarya</taxon>
        <taxon>Ascomycota</taxon>
        <taxon>Pezizomycotina</taxon>
        <taxon>Eurotiomycetes</taxon>
        <taxon>Eurotiomycetidae</taxon>
        <taxon>Eurotiales</taxon>
        <taxon>Trichocomaceae</taxon>
        <taxon>Talaromyces</taxon>
        <taxon>Talaromyces sect. Talaromyces</taxon>
    </lineage>
</organism>
<feature type="chain" id="PRO_0000405090" description="Nuclear distribution protein nudF 1">
    <location>
        <begin position="1"/>
        <end position="459"/>
    </location>
</feature>
<feature type="domain" description="LisH" evidence="1">
    <location>
        <begin position="9"/>
        <end position="41"/>
    </location>
</feature>
<feature type="repeat" description="WD 1">
    <location>
        <begin position="114"/>
        <end position="155"/>
    </location>
</feature>
<feature type="repeat" description="WD 2">
    <location>
        <begin position="157"/>
        <end position="197"/>
    </location>
</feature>
<feature type="repeat" description="WD 3">
    <location>
        <begin position="201"/>
        <end position="240"/>
    </location>
</feature>
<feature type="repeat" description="WD 4">
    <location>
        <begin position="243"/>
        <end position="282"/>
    </location>
</feature>
<feature type="repeat" description="WD 5">
    <location>
        <begin position="288"/>
        <end position="349"/>
    </location>
</feature>
<feature type="repeat" description="WD 6">
    <location>
        <begin position="351"/>
        <end position="390"/>
    </location>
</feature>
<feature type="repeat" description="WD 7">
    <location>
        <begin position="395"/>
        <end position="440"/>
    </location>
</feature>
<feature type="repeat" description="WD 8">
    <location>
        <begin position="442"/>
        <end position="459"/>
    </location>
</feature>
<feature type="coiled-coil region" evidence="1">
    <location>
        <begin position="61"/>
        <end position="88"/>
    </location>
</feature>
<evidence type="ECO:0000255" key="1">
    <source>
        <dbReference type="HAMAP-Rule" id="MF_03141"/>
    </source>
</evidence>
<accession>B6QC56</accession>
<gene>
    <name evidence="1" type="primary">nudF-1</name>
    <name evidence="1" type="synonym">lis1-1</name>
    <name type="ORF">PMAA_066550</name>
</gene>
<proteinExistence type="inferred from homology"/>
<dbReference type="EMBL" id="DS995900">
    <property type="protein sequence ID" value="EEA25550.1"/>
    <property type="molecule type" value="Genomic_DNA"/>
</dbReference>
<dbReference type="RefSeq" id="XP_002146097.1">
    <property type="nucleotide sequence ID" value="XM_002146061.1"/>
</dbReference>
<dbReference type="SMR" id="B6QC56"/>
<dbReference type="STRING" id="441960.B6QC56"/>
<dbReference type="VEuPathDB" id="FungiDB:PMAA_066550"/>
<dbReference type="HOGENOM" id="CLU_000288_57_15_1"/>
<dbReference type="OrthoDB" id="724at28568"/>
<dbReference type="PhylomeDB" id="B6QC56"/>
<dbReference type="Proteomes" id="UP000001294">
    <property type="component" value="Unassembled WGS sequence"/>
</dbReference>
<dbReference type="GO" id="GO:0005737">
    <property type="term" value="C:cytoplasm"/>
    <property type="evidence" value="ECO:0007669"/>
    <property type="project" value="UniProtKB-UniRule"/>
</dbReference>
<dbReference type="GO" id="GO:0005874">
    <property type="term" value="C:microtubule"/>
    <property type="evidence" value="ECO:0007669"/>
    <property type="project" value="UniProtKB-KW"/>
</dbReference>
<dbReference type="GO" id="GO:0005875">
    <property type="term" value="C:microtubule associated complex"/>
    <property type="evidence" value="ECO:0007669"/>
    <property type="project" value="UniProtKB-UniRule"/>
</dbReference>
<dbReference type="GO" id="GO:0000922">
    <property type="term" value="C:spindle pole"/>
    <property type="evidence" value="ECO:0007669"/>
    <property type="project" value="UniProtKB-SubCell"/>
</dbReference>
<dbReference type="GO" id="GO:1990234">
    <property type="term" value="C:transferase complex"/>
    <property type="evidence" value="ECO:0007669"/>
    <property type="project" value="UniProtKB-ARBA"/>
</dbReference>
<dbReference type="GO" id="GO:0070840">
    <property type="term" value="F:dynein complex binding"/>
    <property type="evidence" value="ECO:0007669"/>
    <property type="project" value="UniProtKB-UniRule"/>
</dbReference>
<dbReference type="GO" id="GO:0051301">
    <property type="term" value="P:cell division"/>
    <property type="evidence" value="ECO:0007669"/>
    <property type="project" value="UniProtKB-KW"/>
</dbReference>
<dbReference type="GO" id="GO:0000132">
    <property type="term" value="P:establishment of mitotic spindle orientation"/>
    <property type="evidence" value="ECO:0007669"/>
    <property type="project" value="UniProtKB-UniRule"/>
</dbReference>
<dbReference type="GO" id="GO:0051012">
    <property type="term" value="P:microtubule sliding"/>
    <property type="evidence" value="ECO:0007669"/>
    <property type="project" value="UniProtKB-UniRule"/>
</dbReference>
<dbReference type="CDD" id="cd00200">
    <property type="entry name" value="WD40"/>
    <property type="match status" value="1"/>
</dbReference>
<dbReference type="FunFam" id="2.130.10.10:FF:000342">
    <property type="entry name" value="Nuclear distribution protein PAC1"/>
    <property type="match status" value="1"/>
</dbReference>
<dbReference type="FunFam" id="1.20.960.30:FF:000002">
    <property type="entry name" value="Platelet-activating factor acetylhydrolase ib"/>
    <property type="match status" value="1"/>
</dbReference>
<dbReference type="Gene3D" id="1.20.960.30">
    <property type="match status" value="1"/>
</dbReference>
<dbReference type="Gene3D" id="2.130.10.10">
    <property type="entry name" value="YVTN repeat-like/Quinoprotein amine dehydrogenase"/>
    <property type="match status" value="1"/>
</dbReference>
<dbReference type="HAMAP" id="MF_03141">
    <property type="entry name" value="lis1"/>
    <property type="match status" value="1"/>
</dbReference>
<dbReference type="InterPro" id="IPR017252">
    <property type="entry name" value="Dynein_regulator_LIS1"/>
</dbReference>
<dbReference type="InterPro" id="IPR020472">
    <property type="entry name" value="G-protein_beta_WD-40_rep"/>
</dbReference>
<dbReference type="InterPro" id="IPR037190">
    <property type="entry name" value="LIS1_N"/>
</dbReference>
<dbReference type="InterPro" id="IPR006594">
    <property type="entry name" value="LisH"/>
</dbReference>
<dbReference type="InterPro" id="IPR056795">
    <property type="entry name" value="PAC1-like_LisH-like_dom"/>
</dbReference>
<dbReference type="InterPro" id="IPR015943">
    <property type="entry name" value="WD40/YVTN_repeat-like_dom_sf"/>
</dbReference>
<dbReference type="InterPro" id="IPR019775">
    <property type="entry name" value="WD40_repeat_CS"/>
</dbReference>
<dbReference type="InterPro" id="IPR036322">
    <property type="entry name" value="WD40_repeat_dom_sf"/>
</dbReference>
<dbReference type="InterPro" id="IPR001680">
    <property type="entry name" value="WD40_rpt"/>
</dbReference>
<dbReference type="PANTHER" id="PTHR22847:SF637">
    <property type="entry name" value="WD REPEAT DOMAIN 5B"/>
    <property type="match status" value="1"/>
</dbReference>
<dbReference type="PANTHER" id="PTHR22847">
    <property type="entry name" value="WD40 REPEAT PROTEIN"/>
    <property type="match status" value="1"/>
</dbReference>
<dbReference type="Pfam" id="PF24951">
    <property type="entry name" value="LisH_PAC1"/>
    <property type="match status" value="1"/>
</dbReference>
<dbReference type="Pfam" id="PF00400">
    <property type="entry name" value="WD40"/>
    <property type="match status" value="6"/>
</dbReference>
<dbReference type="PIRSF" id="PIRSF037647">
    <property type="entry name" value="Dynein_regulator_Lis1"/>
    <property type="match status" value="1"/>
</dbReference>
<dbReference type="PRINTS" id="PR00320">
    <property type="entry name" value="GPROTEINBRPT"/>
</dbReference>
<dbReference type="SMART" id="SM00320">
    <property type="entry name" value="WD40"/>
    <property type="match status" value="7"/>
</dbReference>
<dbReference type="SUPFAM" id="SSF109925">
    <property type="entry name" value="Lissencephaly-1 protein (Lis-1, PAF-AH alpha) N-terminal domain"/>
    <property type="match status" value="1"/>
</dbReference>
<dbReference type="SUPFAM" id="SSF50978">
    <property type="entry name" value="WD40 repeat-like"/>
    <property type="match status" value="1"/>
</dbReference>
<dbReference type="PROSITE" id="PS50896">
    <property type="entry name" value="LISH"/>
    <property type="match status" value="1"/>
</dbReference>
<dbReference type="PROSITE" id="PS00678">
    <property type="entry name" value="WD_REPEATS_1"/>
    <property type="match status" value="2"/>
</dbReference>
<dbReference type="PROSITE" id="PS50082">
    <property type="entry name" value="WD_REPEATS_2"/>
    <property type="match status" value="6"/>
</dbReference>
<dbReference type="PROSITE" id="PS50294">
    <property type="entry name" value="WD_REPEATS_REGION"/>
    <property type="match status" value="1"/>
</dbReference>